<sequence length="604" mass="69957">MLIIFKELTKQFEQSLLDSLEKNDKRGEFDNLRKNLVTQSSKEEFGDYQCNVCLCLSKIYKKKPREISEDFVYLLNKNKSISKLCKSLEIAGPGFINIKLKDEVLINEIKSNIQCPRAGIPLIKKDLDSGLSNKVIVDFSSPNIAKEMHVGHLRSTIIGDSISRIFELRGYQVLRLNHVGDWGTQFGMLITQLKDLYSNDLEEIGKIKISDLVEFYKASKKRFDNESEFQKRSREEVVKLQSGDSKSIQAWKLLCDQSRKEFDEIYKNLKIKIKERGESFYNPFLKSVIEDLKFKKILIEDQGAKCVFLDGMTNKEGKPLPLIVQKKDGGFNYATTDLAAIRYRFNKAPNGDDASRIIYVTDHGQANHFAGVFQVAKKAKWIPDKCQVDHVPFGLVQGIDGKKLKTREGETIRLKDLLNEAVRRAKEDLLKRLEDEDRYETEEFIANTSRIIGLGAVKYADLSQNRITNYQFSFDKMLSLNGNTAPYLLYTLVRISGIKRKNDFVYDSEDFQYINYEHKSEWKLIRKLLKFDEVIISIEKDLMPNRLCNYLFELCQTFNRFYDQVPILKEEKNIKISRLNLCDLTAKTLKLSLELLGIETLERM</sequence>
<reference key="1">
    <citation type="journal article" date="2006" name="Science">
        <title>Genomic islands and the ecology and evolution of Prochlorococcus.</title>
        <authorList>
            <person name="Coleman M.L."/>
            <person name="Sullivan M.B."/>
            <person name="Martiny A.C."/>
            <person name="Steglich C."/>
            <person name="Barry K."/>
            <person name="Delong E.F."/>
            <person name="Chisholm S.W."/>
        </authorList>
    </citation>
    <scope>NUCLEOTIDE SEQUENCE [LARGE SCALE GENOMIC DNA]</scope>
    <source>
        <strain>MIT 9312</strain>
    </source>
</reference>
<comment type="catalytic activity">
    <reaction evidence="1">
        <text>tRNA(Arg) + L-arginine + ATP = L-arginyl-tRNA(Arg) + AMP + diphosphate</text>
        <dbReference type="Rhea" id="RHEA:20301"/>
        <dbReference type="Rhea" id="RHEA-COMP:9658"/>
        <dbReference type="Rhea" id="RHEA-COMP:9673"/>
        <dbReference type="ChEBI" id="CHEBI:30616"/>
        <dbReference type="ChEBI" id="CHEBI:32682"/>
        <dbReference type="ChEBI" id="CHEBI:33019"/>
        <dbReference type="ChEBI" id="CHEBI:78442"/>
        <dbReference type="ChEBI" id="CHEBI:78513"/>
        <dbReference type="ChEBI" id="CHEBI:456215"/>
        <dbReference type="EC" id="6.1.1.19"/>
    </reaction>
</comment>
<comment type="subunit">
    <text evidence="1">Monomer.</text>
</comment>
<comment type="subcellular location">
    <subcellularLocation>
        <location evidence="1">Cytoplasm</location>
    </subcellularLocation>
</comment>
<comment type="similarity">
    <text evidence="1">Belongs to the class-I aminoacyl-tRNA synthetase family.</text>
</comment>
<dbReference type="EC" id="6.1.1.19" evidence="1"/>
<dbReference type="EMBL" id="CP000111">
    <property type="protein sequence ID" value="ABB49251.1"/>
    <property type="molecule type" value="Genomic_DNA"/>
</dbReference>
<dbReference type="RefSeq" id="WP_011375755.1">
    <property type="nucleotide sequence ID" value="NC_007577.1"/>
</dbReference>
<dbReference type="SMR" id="Q31CZ4"/>
<dbReference type="STRING" id="74546.PMT9312_0189"/>
<dbReference type="KEGG" id="pmi:PMT9312_0189"/>
<dbReference type="eggNOG" id="COG0018">
    <property type="taxonomic scope" value="Bacteria"/>
</dbReference>
<dbReference type="HOGENOM" id="CLU_006406_5_1_3"/>
<dbReference type="OrthoDB" id="9805987at2"/>
<dbReference type="Proteomes" id="UP000002715">
    <property type="component" value="Chromosome"/>
</dbReference>
<dbReference type="GO" id="GO:0005737">
    <property type="term" value="C:cytoplasm"/>
    <property type="evidence" value="ECO:0007669"/>
    <property type="project" value="UniProtKB-SubCell"/>
</dbReference>
<dbReference type="GO" id="GO:0004814">
    <property type="term" value="F:arginine-tRNA ligase activity"/>
    <property type="evidence" value="ECO:0007669"/>
    <property type="project" value="UniProtKB-UniRule"/>
</dbReference>
<dbReference type="GO" id="GO:0005524">
    <property type="term" value="F:ATP binding"/>
    <property type="evidence" value="ECO:0007669"/>
    <property type="project" value="UniProtKB-UniRule"/>
</dbReference>
<dbReference type="GO" id="GO:0006420">
    <property type="term" value="P:arginyl-tRNA aminoacylation"/>
    <property type="evidence" value="ECO:0007669"/>
    <property type="project" value="UniProtKB-UniRule"/>
</dbReference>
<dbReference type="CDD" id="cd07956">
    <property type="entry name" value="Anticodon_Ia_Arg"/>
    <property type="match status" value="1"/>
</dbReference>
<dbReference type="CDD" id="cd00671">
    <property type="entry name" value="ArgRS_core"/>
    <property type="match status" value="1"/>
</dbReference>
<dbReference type="FunFam" id="3.40.50.620:FF:000030">
    <property type="entry name" value="Arginine--tRNA ligase"/>
    <property type="match status" value="1"/>
</dbReference>
<dbReference type="FunFam" id="1.10.730.10:FF:000006">
    <property type="entry name" value="Arginyl-tRNA synthetase 2, mitochondrial"/>
    <property type="match status" value="1"/>
</dbReference>
<dbReference type="Gene3D" id="3.30.1360.70">
    <property type="entry name" value="Arginyl tRNA synthetase N-terminal domain"/>
    <property type="match status" value="1"/>
</dbReference>
<dbReference type="Gene3D" id="3.40.50.620">
    <property type="entry name" value="HUPs"/>
    <property type="match status" value="1"/>
</dbReference>
<dbReference type="Gene3D" id="1.10.730.10">
    <property type="entry name" value="Isoleucyl-tRNA Synthetase, Domain 1"/>
    <property type="match status" value="1"/>
</dbReference>
<dbReference type="HAMAP" id="MF_00123">
    <property type="entry name" value="Arg_tRNA_synth"/>
    <property type="match status" value="1"/>
</dbReference>
<dbReference type="InterPro" id="IPR001412">
    <property type="entry name" value="aa-tRNA-synth_I_CS"/>
</dbReference>
<dbReference type="InterPro" id="IPR001278">
    <property type="entry name" value="Arg-tRNA-ligase"/>
</dbReference>
<dbReference type="InterPro" id="IPR005148">
    <property type="entry name" value="Arg-tRNA-synth_N"/>
</dbReference>
<dbReference type="InterPro" id="IPR036695">
    <property type="entry name" value="Arg-tRNA-synth_N_sf"/>
</dbReference>
<dbReference type="InterPro" id="IPR035684">
    <property type="entry name" value="ArgRS_core"/>
</dbReference>
<dbReference type="InterPro" id="IPR008909">
    <property type="entry name" value="DALR_anticod-bd"/>
</dbReference>
<dbReference type="InterPro" id="IPR014729">
    <property type="entry name" value="Rossmann-like_a/b/a_fold"/>
</dbReference>
<dbReference type="InterPro" id="IPR009080">
    <property type="entry name" value="tRNAsynth_Ia_anticodon-bd"/>
</dbReference>
<dbReference type="NCBIfam" id="TIGR00456">
    <property type="entry name" value="argS"/>
    <property type="match status" value="1"/>
</dbReference>
<dbReference type="PANTHER" id="PTHR11956:SF5">
    <property type="entry name" value="ARGININE--TRNA LIGASE, CYTOPLASMIC"/>
    <property type="match status" value="1"/>
</dbReference>
<dbReference type="PANTHER" id="PTHR11956">
    <property type="entry name" value="ARGINYL-TRNA SYNTHETASE"/>
    <property type="match status" value="1"/>
</dbReference>
<dbReference type="Pfam" id="PF03485">
    <property type="entry name" value="Arg_tRNA_synt_N"/>
    <property type="match status" value="1"/>
</dbReference>
<dbReference type="Pfam" id="PF05746">
    <property type="entry name" value="DALR_1"/>
    <property type="match status" value="1"/>
</dbReference>
<dbReference type="Pfam" id="PF00750">
    <property type="entry name" value="tRNA-synt_1d"/>
    <property type="match status" value="1"/>
</dbReference>
<dbReference type="PRINTS" id="PR01038">
    <property type="entry name" value="TRNASYNTHARG"/>
</dbReference>
<dbReference type="SMART" id="SM01016">
    <property type="entry name" value="Arg_tRNA_synt_N"/>
    <property type="match status" value="1"/>
</dbReference>
<dbReference type="SMART" id="SM00836">
    <property type="entry name" value="DALR_1"/>
    <property type="match status" value="1"/>
</dbReference>
<dbReference type="SUPFAM" id="SSF47323">
    <property type="entry name" value="Anticodon-binding domain of a subclass of class I aminoacyl-tRNA synthetases"/>
    <property type="match status" value="1"/>
</dbReference>
<dbReference type="SUPFAM" id="SSF55190">
    <property type="entry name" value="Arginyl-tRNA synthetase (ArgRS), N-terminal 'additional' domain"/>
    <property type="match status" value="1"/>
</dbReference>
<dbReference type="SUPFAM" id="SSF52374">
    <property type="entry name" value="Nucleotidylyl transferase"/>
    <property type="match status" value="1"/>
</dbReference>
<dbReference type="PROSITE" id="PS00178">
    <property type="entry name" value="AA_TRNA_LIGASE_I"/>
    <property type="match status" value="1"/>
</dbReference>
<organism>
    <name type="scientific">Prochlorococcus marinus (strain MIT 9312)</name>
    <dbReference type="NCBI Taxonomy" id="74546"/>
    <lineage>
        <taxon>Bacteria</taxon>
        <taxon>Bacillati</taxon>
        <taxon>Cyanobacteriota</taxon>
        <taxon>Cyanophyceae</taxon>
        <taxon>Synechococcales</taxon>
        <taxon>Prochlorococcaceae</taxon>
        <taxon>Prochlorococcus</taxon>
    </lineage>
</organism>
<accession>Q31CZ4</accession>
<gene>
    <name evidence="1" type="primary">argS</name>
    <name type="ordered locus">PMT9312_0189</name>
</gene>
<feature type="chain" id="PRO_0000242065" description="Arginine--tRNA ligase">
    <location>
        <begin position="1"/>
        <end position="604"/>
    </location>
</feature>
<feature type="short sequence motif" description="'HIGH' region">
    <location>
        <begin position="142"/>
        <end position="152"/>
    </location>
</feature>
<proteinExistence type="inferred from homology"/>
<keyword id="KW-0030">Aminoacyl-tRNA synthetase</keyword>
<keyword id="KW-0067">ATP-binding</keyword>
<keyword id="KW-0963">Cytoplasm</keyword>
<keyword id="KW-0436">Ligase</keyword>
<keyword id="KW-0547">Nucleotide-binding</keyword>
<keyword id="KW-0648">Protein biosynthesis</keyword>
<evidence type="ECO:0000255" key="1">
    <source>
        <dbReference type="HAMAP-Rule" id="MF_00123"/>
    </source>
</evidence>
<protein>
    <recommendedName>
        <fullName evidence="1">Arginine--tRNA ligase</fullName>
        <ecNumber evidence="1">6.1.1.19</ecNumber>
    </recommendedName>
    <alternativeName>
        <fullName evidence="1">Arginyl-tRNA synthetase</fullName>
        <shortName evidence="1">ArgRS</shortName>
    </alternativeName>
</protein>
<name>SYR_PROM9</name>